<keyword id="KW-0150">Chloroplast</keyword>
<keyword id="KW-0934">Plastid</keyword>
<keyword id="KW-0687">Ribonucleoprotein</keyword>
<keyword id="KW-0689">Ribosomal protein</keyword>
<protein>
    <recommendedName>
        <fullName evidence="1">Large ribosomal subunit protein uL16c</fullName>
    </recommendedName>
    <alternativeName>
        <fullName evidence="3">50S ribosomal protein L16, chloroplastic</fullName>
    </alternativeName>
</protein>
<accession>P51307</accession>
<sequence length="139" mass="15714">MLSPKKTKFRKQHRGRMKGSASKGNTIAFGDYALQATEPVWLTSRQIEATRRTITRYVRRGGKLWIRVFPDKPVTARPAETRMGSGKGAPEYWVAVIKPGHILFEITGVPQKTAQQAMKLASYKLPIKTKFIVRNTIES</sequence>
<feature type="chain" id="PRO_0000062307" description="Large ribosomal subunit protein uL16c">
    <location>
        <begin position="1"/>
        <end position="139"/>
    </location>
</feature>
<feature type="region of interest" description="Disordered" evidence="2">
    <location>
        <begin position="1"/>
        <end position="23"/>
    </location>
</feature>
<feature type="compositionally biased region" description="Basic residues" evidence="2">
    <location>
        <begin position="1"/>
        <end position="17"/>
    </location>
</feature>
<dbReference type="EMBL" id="U38804">
    <property type="protein sequence ID" value="AAC08193.1"/>
    <property type="molecule type" value="Genomic_DNA"/>
</dbReference>
<dbReference type="PIR" id="S73228">
    <property type="entry name" value="S73228"/>
</dbReference>
<dbReference type="RefSeq" id="NP_053917.1">
    <property type="nucleotide sequence ID" value="NC_000925.1"/>
</dbReference>
<dbReference type="SMR" id="P51307"/>
<dbReference type="GeneID" id="809936"/>
<dbReference type="GO" id="GO:0009507">
    <property type="term" value="C:chloroplast"/>
    <property type="evidence" value="ECO:0007669"/>
    <property type="project" value="UniProtKB-SubCell"/>
</dbReference>
<dbReference type="GO" id="GO:0005762">
    <property type="term" value="C:mitochondrial large ribosomal subunit"/>
    <property type="evidence" value="ECO:0007669"/>
    <property type="project" value="TreeGrafter"/>
</dbReference>
<dbReference type="GO" id="GO:0019843">
    <property type="term" value="F:rRNA binding"/>
    <property type="evidence" value="ECO:0007669"/>
    <property type="project" value="InterPro"/>
</dbReference>
<dbReference type="GO" id="GO:0003735">
    <property type="term" value="F:structural constituent of ribosome"/>
    <property type="evidence" value="ECO:0007669"/>
    <property type="project" value="InterPro"/>
</dbReference>
<dbReference type="GO" id="GO:0032543">
    <property type="term" value="P:mitochondrial translation"/>
    <property type="evidence" value="ECO:0007669"/>
    <property type="project" value="TreeGrafter"/>
</dbReference>
<dbReference type="CDD" id="cd01433">
    <property type="entry name" value="Ribosomal_L16_L10e"/>
    <property type="match status" value="1"/>
</dbReference>
<dbReference type="FunFam" id="3.90.1170.10:FF:000001">
    <property type="entry name" value="50S ribosomal protein L16"/>
    <property type="match status" value="1"/>
</dbReference>
<dbReference type="Gene3D" id="3.90.1170.10">
    <property type="entry name" value="Ribosomal protein L10e/L16"/>
    <property type="match status" value="1"/>
</dbReference>
<dbReference type="HAMAP" id="MF_01342">
    <property type="entry name" value="Ribosomal_uL16"/>
    <property type="match status" value="1"/>
</dbReference>
<dbReference type="InterPro" id="IPR047873">
    <property type="entry name" value="Ribosomal_uL16"/>
</dbReference>
<dbReference type="InterPro" id="IPR000114">
    <property type="entry name" value="Ribosomal_uL16_bact-type"/>
</dbReference>
<dbReference type="InterPro" id="IPR020798">
    <property type="entry name" value="Ribosomal_uL16_CS"/>
</dbReference>
<dbReference type="InterPro" id="IPR016180">
    <property type="entry name" value="Ribosomal_uL16_dom"/>
</dbReference>
<dbReference type="InterPro" id="IPR036920">
    <property type="entry name" value="Ribosomal_uL16_sf"/>
</dbReference>
<dbReference type="NCBIfam" id="TIGR01164">
    <property type="entry name" value="rplP_bact"/>
    <property type="match status" value="1"/>
</dbReference>
<dbReference type="PANTHER" id="PTHR12220">
    <property type="entry name" value="50S/60S RIBOSOMAL PROTEIN L16"/>
    <property type="match status" value="1"/>
</dbReference>
<dbReference type="PANTHER" id="PTHR12220:SF13">
    <property type="entry name" value="LARGE RIBOSOMAL SUBUNIT PROTEIN UL16M"/>
    <property type="match status" value="1"/>
</dbReference>
<dbReference type="Pfam" id="PF00252">
    <property type="entry name" value="Ribosomal_L16"/>
    <property type="match status" value="1"/>
</dbReference>
<dbReference type="PRINTS" id="PR00060">
    <property type="entry name" value="RIBOSOMALL16"/>
</dbReference>
<dbReference type="SUPFAM" id="SSF54686">
    <property type="entry name" value="Ribosomal protein L16p/L10e"/>
    <property type="match status" value="1"/>
</dbReference>
<dbReference type="PROSITE" id="PS00586">
    <property type="entry name" value="RIBOSOMAL_L16_1"/>
    <property type="match status" value="1"/>
</dbReference>
<dbReference type="PROSITE" id="PS00701">
    <property type="entry name" value="RIBOSOMAL_L16_2"/>
    <property type="match status" value="1"/>
</dbReference>
<reference key="1">
    <citation type="journal article" date="1995" name="Plant Mol. Biol. Rep.">
        <title>Complete nucleotide sequence of the Porphyra purpurea chloroplast genome.</title>
        <authorList>
            <person name="Reith M.E."/>
            <person name="Munholland J."/>
        </authorList>
    </citation>
    <scope>NUCLEOTIDE SEQUENCE [LARGE SCALE GENOMIC DNA]</scope>
    <source>
        <strain>Avonport</strain>
    </source>
</reference>
<name>RK16_PORPU</name>
<proteinExistence type="inferred from homology"/>
<gene>
    <name evidence="1" type="primary">rpl16</name>
</gene>
<geneLocation type="chloroplast"/>
<evidence type="ECO:0000255" key="1">
    <source>
        <dbReference type="HAMAP-Rule" id="MF_01342"/>
    </source>
</evidence>
<evidence type="ECO:0000256" key="2">
    <source>
        <dbReference type="SAM" id="MobiDB-lite"/>
    </source>
</evidence>
<evidence type="ECO:0000305" key="3"/>
<organism>
    <name type="scientific">Porphyra purpurea</name>
    <name type="common">Red seaweed</name>
    <name type="synonym">Ulva purpurea</name>
    <dbReference type="NCBI Taxonomy" id="2787"/>
    <lineage>
        <taxon>Eukaryota</taxon>
        <taxon>Rhodophyta</taxon>
        <taxon>Bangiophyceae</taxon>
        <taxon>Bangiales</taxon>
        <taxon>Bangiaceae</taxon>
        <taxon>Porphyra</taxon>
    </lineage>
</organism>
<comment type="subunit">
    <text evidence="1">Part of the 50S ribosomal subunit.</text>
</comment>
<comment type="subcellular location">
    <subcellularLocation>
        <location>Plastid</location>
        <location>Chloroplast</location>
    </subcellularLocation>
</comment>
<comment type="similarity">
    <text evidence="1">Belongs to the universal ribosomal protein uL16 family.</text>
</comment>